<protein>
    <recommendedName>
        <fullName>Formin-H</fullName>
    </recommendedName>
    <alternativeName>
        <fullName>Diaphanous-related formin dia2</fullName>
        <shortName>dDia2</shortName>
    </alternativeName>
</protein>
<proteinExistence type="evidence at protein level"/>
<reference key="1">
    <citation type="journal article" date="2005" name="Nat. Cell Biol.">
        <title>The Diaphanous-related formin dDia2 is required for the formation and maintenance of filopodia.</title>
        <authorList>
            <person name="Schirenbeck A."/>
            <person name="Bretschneider T."/>
            <person name="Arasada R."/>
            <person name="Schleicher M."/>
            <person name="Faix J."/>
        </authorList>
    </citation>
    <scope>NUCLEOTIDE SEQUENCE [MRNA]</scope>
    <scope>SUBCELLULAR LOCATION</scope>
    <scope>INTERACTION WITH PROB AND RAC1A</scope>
    <source>
        <strain>AX2</strain>
    </source>
</reference>
<reference key="2">
    <citation type="journal article" date="2005" name="Nature">
        <title>The genome of the social amoeba Dictyostelium discoideum.</title>
        <authorList>
            <person name="Eichinger L."/>
            <person name="Pachebat J.A."/>
            <person name="Gloeckner G."/>
            <person name="Rajandream M.A."/>
            <person name="Sucgang R."/>
            <person name="Berriman M."/>
            <person name="Song J."/>
            <person name="Olsen R."/>
            <person name="Szafranski K."/>
            <person name="Xu Q."/>
            <person name="Tunggal B."/>
            <person name="Kummerfeld S."/>
            <person name="Madera M."/>
            <person name="Konfortov B.A."/>
            <person name="Rivero F."/>
            <person name="Bankier A.T."/>
            <person name="Lehmann R."/>
            <person name="Hamlin N."/>
            <person name="Davies R."/>
            <person name="Gaudet P."/>
            <person name="Fey P."/>
            <person name="Pilcher K."/>
            <person name="Chen G."/>
            <person name="Saunders D."/>
            <person name="Sodergren E.J."/>
            <person name="Davis P."/>
            <person name="Kerhornou A."/>
            <person name="Nie X."/>
            <person name="Hall N."/>
            <person name="Anjard C."/>
            <person name="Hemphill L."/>
            <person name="Bason N."/>
            <person name="Farbrother P."/>
            <person name="Desany B."/>
            <person name="Just E."/>
            <person name="Morio T."/>
            <person name="Rost R."/>
            <person name="Churcher C.M."/>
            <person name="Cooper J."/>
            <person name="Haydock S."/>
            <person name="van Driessche N."/>
            <person name="Cronin A."/>
            <person name="Goodhead I."/>
            <person name="Muzny D.M."/>
            <person name="Mourier T."/>
            <person name="Pain A."/>
            <person name="Lu M."/>
            <person name="Harper D."/>
            <person name="Lindsay R."/>
            <person name="Hauser H."/>
            <person name="James K.D."/>
            <person name="Quiles M."/>
            <person name="Madan Babu M."/>
            <person name="Saito T."/>
            <person name="Buchrieser C."/>
            <person name="Wardroper A."/>
            <person name="Felder M."/>
            <person name="Thangavelu M."/>
            <person name="Johnson D."/>
            <person name="Knights A."/>
            <person name="Loulseged H."/>
            <person name="Mungall K.L."/>
            <person name="Oliver K."/>
            <person name="Price C."/>
            <person name="Quail M.A."/>
            <person name="Urushihara H."/>
            <person name="Hernandez J."/>
            <person name="Rabbinowitsch E."/>
            <person name="Steffen D."/>
            <person name="Sanders M."/>
            <person name="Ma J."/>
            <person name="Kohara Y."/>
            <person name="Sharp S."/>
            <person name="Simmonds M.N."/>
            <person name="Spiegler S."/>
            <person name="Tivey A."/>
            <person name="Sugano S."/>
            <person name="White B."/>
            <person name="Walker D."/>
            <person name="Woodward J.R."/>
            <person name="Winckler T."/>
            <person name="Tanaka Y."/>
            <person name="Shaulsky G."/>
            <person name="Schleicher M."/>
            <person name="Weinstock G.M."/>
            <person name="Rosenthal A."/>
            <person name="Cox E.C."/>
            <person name="Chisholm R.L."/>
            <person name="Gibbs R.A."/>
            <person name="Loomis W.F."/>
            <person name="Platzer M."/>
            <person name="Kay R.R."/>
            <person name="Williams J.G."/>
            <person name="Dear P.H."/>
            <person name="Noegel A.A."/>
            <person name="Barrell B.G."/>
            <person name="Kuspa A."/>
        </authorList>
    </citation>
    <scope>NUCLEOTIDE SEQUENCE [LARGE SCALE GENOMIC DNA]</scope>
    <source>
        <strain>AX4</strain>
    </source>
</reference>
<reference key="3">
    <citation type="journal article" date="2006" name="Proc. Natl. Acad. Sci. U.S.A.">
        <title>The bundling activity of vasodilator-stimulated phosphoprotein is required for filopodium formation.</title>
        <authorList>
            <person name="Schirenbeck A."/>
            <person name="Arasada R."/>
            <person name="Bretschneider T."/>
            <person name="Stradal T.E.B."/>
            <person name="Schleicher M."/>
            <person name="Faix J."/>
        </authorList>
    </citation>
    <scope>INTERACTION WITH VASP</scope>
    <source>
        <strain>AX2</strain>
    </source>
</reference>
<reference key="4">
    <citation type="journal article" date="2005" name="BMC Genomics">
        <title>A comparative sequence analysis reveals a common GBD/FH3-FH1-FH2-DAD architecture in formins from Dictyostelium, fungi and metazoa.</title>
        <authorList>
            <person name="Rivero F."/>
            <person name="Muramoto T."/>
            <person name="Meyer A.-K."/>
            <person name="Urushihara H."/>
            <person name="Uyeda T.Q.P."/>
            <person name="Kitayama C."/>
        </authorList>
    </citation>
    <scope>DEVELOPMENTAL STAGE</scope>
</reference>
<reference key="5">
    <citation type="journal article" date="2006" name="Eur. J. Cell Biol.">
        <title>Rho GTPase signaling in Dictyostelium discoideum: insights from the genome.</title>
        <authorList>
            <person name="Vlahou G."/>
            <person name="Rivero F."/>
        </authorList>
    </citation>
    <scope>INTERACTION WITH RHO GTPASE</scope>
</reference>
<keyword id="KW-0009">Actin-binding</keyword>
<keyword id="KW-0175">Coiled coil</keyword>
<keyword id="KW-0963">Cytoplasm</keyword>
<keyword id="KW-0206">Cytoskeleton</keyword>
<keyword id="KW-1185">Reference proteome</keyword>
<sequence>MSFDLESNSSGGSTIGRNSSIRLSSGLAPSESTVSLNEIIDLDREFELLLDKLAIEDPIKRKQMQSLPDISKRTLLEQNKADIYRTVKHKGPIESFADVKSVISSINTKHVPIDIIKTLRIHLNTADRDWIQSFLDNDGVQPILNILKRLERNKNRKRKEHSILQWECTRCIAALMKIKIGMEYIASFPQTTNLMVLCLDTPLIKAKTLVLELLAAIAVTDRGHGAVLTSMIYHKEVKKEITRYFNLVQSLKIEKNAEYLTTCMSFINCIISSPSDLPSRIEIRKAFLNLKILKYIENLRADYNEDKNLLTQLDVFEEELSTDEQLNSQQGTQIGIEDLFSQISSRVTGTPSQQELITLMTHFQRMSSSNLGLGVWTLYNALANQLEDELKIHPDLDVTLVSLLFPEVKKSSSGLFGFGSKSKSPSSSPALSSMAKTELKKDNEEKQKTIEHLLKQLNKFSGGQNTERWMIEREEKNKLIAQLMAQTKNGGGGGGGGVGGDSSLSNDEALKRENQLLRMEIENIKNNPSVLLNSGNSINGDVPNLFISSPGSTLSPSPSGEPPIPSTDFGITSSSIHTSTDKLTNSTEPILGSPPPPPPPPMSGGGGPPPPPPPPGGKSNKPAKPIIKPSVKMRNFNWITIPALKVQGTFWDKLDETSFIQSLDKVELESLFSAKAPTVKVESKQLTRKVVVTVIDMKKANNCAIMLQHFKIPNEQLKKMQIMLDEKHFSQENAIYLLQFAPTKEDIEAIKEYQGDQMQLGAAEQYMLTVMDIPKLDSRLKAFIFKQKFEGLVEDLVPDIKAIKAASLELKKSKRLSDILKFILAIGNYVNGSTTRGGAFGFKVLETLPKMRDARSNDNKLSLLHFLAKTLQDRIPEIWNIGAELPHIEHASEVSLNNIISDSSEIKRSIDLIERDFVPMINDPLFAHDKHWIHKITEFQKIAKVQYQRIEKEIDEMNKAFEEITSYFGEPKSTQPDVFFSTINNFLEDLEKAYGEYQAMIRKAELENSKMEDPEKGGLQDLSSQIRSGQLFKDRRVGDSVIAQMQNVDSLRKNLKSTSTTTPNTPPTIKIELPSQSILKPSGQLKK</sequence>
<dbReference type="EMBL" id="AJ748258">
    <property type="protein sequence ID" value="CAG38079.1"/>
    <property type="molecule type" value="mRNA"/>
</dbReference>
<dbReference type="EMBL" id="AAFI02000079">
    <property type="protein sequence ID" value="EAL64632.1"/>
    <property type="molecule type" value="Genomic_DNA"/>
</dbReference>
<dbReference type="RefSeq" id="XP_638143.1">
    <property type="nucleotide sequence ID" value="XM_633051.1"/>
</dbReference>
<dbReference type="SMR" id="Q54N00"/>
<dbReference type="DIP" id="DIP-46561N"/>
<dbReference type="FunCoup" id="Q54N00">
    <property type="interactions" value="7"/>
</dbReference>
<dbReference type="IntAct" id="Q54N00">
    <property type="interactions" value="3"/>
</dbReference>
<dbReference type="STRING" id="44689.Q54N00"/>
<dbReference type="PaxDb" id="44689-DDB0231180"/>
<dbReference type="EnsemblProtists" id="EAL64632">
    <property type="protein sequence ID" value="EAL64632"/>
    <property type="gene ID" value="DDB_G0285589"/>
</dbReference>
<dbReference type="GeneID" id="8625191"/>
<dbReference type="KEGG" id="ddi:DDB_G0285589"/>
<dbReference type="dictyBase" id="DDB_G0285589">
    <property type="gene designation" value="forH"/>
</dbReference>
<dbReference type="VEuPathDB" id="AmoebaDB:DDB_G0285589"/>
<dbReference type="eggNOG" id="KOG1922">
    <property type="taxonomic scope" value="Eukaryota"/>
</dbReference>
<dbReference type="HOGENOM" id="CLU_002356_1_0_1"/>
<dbReference type="InParanoid" id="Q54N00"/>
<dbReference type="OMA" id="ANNCAIM"/>
<dbReference type="PhylomeDB" id="Q54N00"/>
<dbReference type="PRO" id="PR:Q54N00"/>
<dbReference type="Proteomes" id="UP000002195">
    <property type="component" value="Chromosome 4"/>
</dbReference>
<dbReference type="GO" id="GO:0015629">
    <property type="term" value="C:actin cytoskeleton"/>
    <property type="evidence" value="ECO:0000314"/>
    <property type="project" value="dictyBase"/>
</dbReference>
<dbReference type="GO" id="GO:0005938">
    <property type="term" value="C:cell cortex"/>
    <property type="evidence" value="ECO:0000314"/>
    <property type="project" value="dictyBase"/>
</dbReference>
<dbReference type="GO" id="GO:0031254">
    <property type="term" value="C:cell trailing edge"/>
    <property type="evidence" value="ECO:0000314"/>
    <property type="project" value="dictyBase"/>
</dbReference>
<dbReference type="GO" id="GO:0030175">
    <property type="term" value="C:filopodium"/>
    <property type="evidence" value="ECO:0000314"/>
    <property type="project" value="dictyBase"/>
</dbReference>
<dbReference type="GO" id="GO:0032433">
    <property type="term" value="C:filopodium tip"/>
    <property type="evidence" value="ECO:0000314"/>
    <property type="project" value="dictyBase"/>
</dbReference>
<dbReference type="GO" id="GO:0051015">
    <property type="term" value="F:actin filament binding"/>
    <property type="evidence" value="ECO:0000314"/>
    <property type="project" value="dictyBase"/>
</dbReference>
<dbReference type="GO" id="GO:0005522">
    <property type="term" value="F:profilin binding"/>
    <property type="evidence" value="ECO:0000353"/>
    <property type="project" value="dictyBase"/>
</dbReference>
<dbReference type="GO" id="GO:0031267">
    <property type="term" value="F:small GTPase binding"/>
    <property type="evidence" value="ECO:0000353"/>
    <property type="project" value="dictyBase"/>
</dbReference>
<dbReference type="GO" id="GO:0070060">
    <property type="term" value="P:'de novo' actin filament nucleation"/>
    <property type="evidence" value="ECO:0000318"/>
    <property type="project" value="GO_Central"/>
</dbReference>
<dbReference type="GO" id="GO:0030041">
    <property type="term" value="P:actin filament polymerization"/>
    <property type="evidence" value="ECO:0000318"/>
    <property type="project" value="GO_Central"/>
</dbReference>
<dbReference type="GO" id="GO:0045010">
    <property type="term" value="P:actin nucleation"/>
    <property type="evidence" value="ECO:0000314"/>
    <property type="project" value="dictyBase"/>
</dbReference>
<dbReference type="GO" id="GO:0051638">
    <property type="term" value="P:barbed-end actin filament uncapping"/>
    <property type="evidence" value="ECO:0000314"/>
    <property type="project" value="dictyBase"/>
</dbReference>
<dbReference type="GO" id="GO:0000902">
    <property type="term" value="P:cell morphogenesis"/>
    <property type="evidence" value="ECO:0000315"/>
    <property type="project" value="dictyBase"/>
</dbReference>
<dbReference type="GO" id="GO:0048870">
    <property type="term" value="P:cell motility"/>
    <property type="evidence" value="ECO:0000315"/>
    <property type="project" value="dictyBase"/>
</dbReference>
<dbReference type="GO" id="GO:0031589">
    <property type="term" value="P:cell-substrate adhesion"/>
    <property type="evidence" value="ECO:0000315"/>
    <property type="project" value="dictyBase"/>
</dbReference>
<dbReference type="GO" id="GO:0030866">
    <property type="term" value="P:cortical actin cytoskeleton organization"/>
    <property type="evidence" value="ECO:0000316"/>
    <property type="project" value="dictyBase"/>
</dbReference>
<dbReference type="GO" id="GO:0046847">
    <property type="term" value="P:filopodium assembly"/>
    <property type="evidence" value="ECO:0000315"/>
    <property type="project" value="dictyBase"/>
</dbReference>
<dbReference type="GO" id="GO:0000281">
    <property type="term" value="P:mitotic cytokinesis"/>
    <property type="evidence" value="ECO:0000316"/>
    <property type="project" value="dictyBase"/>
</dbReference>
<dbReference type="GO" id="GO:0030838">
    <property type="term" value="P:positive regulation of actin filament polymerization"/>
    <property type="evidence" value="ECO:0000314"/>
    <property type="project" value="dictyBase"/>
</dbReference>
<dbReference type="GO" id="GO:0031268">
    <property type="term" value="P:pseudopodium organization"/>
    <property type="evidence" value="ECO:0000315"/>
    <property type="project" value="dictyBase"/>
</dbReference>
<dbReference type="GO" id="GO:0030587">
    <property type="term" value="P:sorocarp development"/>
    <property type="evidence" value="ECO:0000316"/>
    <property type="project" value="dictyBase"/>
</dbReference>
<dbReference type="FunFam" id="1.20.58.2220:FF:000025">
    <property type="entry name" value="Formin-E"/>
    <property type="match status" value="1"/>
</dbReference>
<dbReference type="FunFam" id="1.25.10.10:FF:001517">
    <property type="entry name" value="Formin-H"/>
    <property type="match status" value="1"/>
</dbReference>
<dbReference type="Gene3D" id="1.20.58.2220">
    <property type="entry name" value="Formin, FH2 domain"/>
    <property type="match status" value="1"/>
</dbReference>
<dbReference type="Gene3D" id="1.25.10.10">
    <property type="entry name" value="Leucine-rich Repeat Variant"/>
    <property type="match status" value="1"/>
</dbReference>
<dbReference type="InterPro" id="IPR011989">
    <property type="entry name" value="ARM-like"/>
</dbReference>
<dbReference type="InterPro" id="IPR016024">
    <property type="entry name" value="ARM-type_fold"/>
</dbReference>
<dbReference type="InterPro" id="IPR015425">
    <property type="entry name" value="FH2_Formin"/>
</dbReference>
<dbReference type="InterPro" id="IPR042201">
    <property type="entry name" value="FH2_Formin_sf"/>
</dbReference>
<dbReference type="InterPro" id="IPR010472">
    <property type="entry name" value="FH3_dom"/>
</dbReference>
<dbReference type="InterPro" id="IPR051425">
    <property type="entry name" value="Formin_Homology"/>
</dbReference>
<dbReference type="InterPro" id="IPR014768">
    <property type="entry name" value="GBD/FH3_dom"/>
</dbReference>
<dbReference type="InterPro" id="IPR010473">
    <property type="entry name" value="GTPase-bd"/>
</dbReference>
<dbReference type="PANTHER" id="PTHR45725">
    <property type="entry name" value="FORMIN HOMOLOGY 2 FAMILY MEMBER"/>
    <property type="match status" value="1"/>
</dbReference>
<dbReference type="PANTHER" id="PTHR45725:SF5">
    <property type="entry name" value="FORMIN-H"/>
    <property type="match status" value="1"/>
</dbReference>
<dbReference type="Pfam" id="PF06367">
    <property type="entry name" value="Drf_FH3"/>
    <property type="match status" value="1"/>
</dbReference>
<dbReference type="Pfam" id="PF06371">
    <property type="entry name" value="Drf_GBD"/>
    <property type="match status" value="1"/>
</dbReference>
<dbReference type="Pfam" id="PF02181">
    <property type="entry name" value="FH2"/>
    <property type="match status" value="1"/>
</dbReference>
<dbReference type="SMART" id="SM01139">
    <property type="entry name" value="Drf_FH3"/>
    <property type="match status" value="1"/>
</dbReference>
<dbReference type="SMART" id="SM01140">
    <property type="entry name" value="Drf_GBD"/>
    <property type="match status" value="1"/>
</dbReference>
<dbReference type="SMART" id="SM00498">
    <property type="entry name" value="FH2"/>
    <property type="match status" value="1"/>
</dbReference>
<dbReference type="SUPFAM" id="SSF48371">
    <property type="entry name" value="ARM repeat"/>
    <property type="match status" value="1"/>
</dbReference>
<dbReference type="SUPFAM" id="SSF101447">
    <property type="entry name" value="Formin homology 2 domain (FH2 domain)"/>
    <property type="match status" value="1"/>
</dbReference>
<dbReference type="PROSITE" id="PS51444">
    <property type="entry name" value="FH2"/>
    <property type="match status" value="1"/>
</dbReference>
<dbReference type="PROSITE" id="PS51232">
    <property type="entry name" value="GBD_FH3"/>
    <property type="match status" value="1"/>
</dbReference>
<comment type="function">
    <text>Formins play an important role in the nucleation of actin and the formation of linear actin filaments. Important for cell migration and formation, elongation and maintenance of filopodia. Specifically controls filopodial dynamics by regulating actin turnover at the barbed ends of actin filaments.</text>
</comment>
<comment type="subunit">
    <text evidence="7 8 9">Interacts with vasP, proB/profilin-2 and rac1A. Interacts (via GBD/FH3 domain) with activated Rho-GTPases.</text>
</comment>
<comment type="interaction">
    <interactant intactId="EBI-1808560">
        <id>Q54N00</id>
    </interactant>
    <interactant intactId="EBI-1808643">
        <id>P34144</id>
        <label>rac1A</label>
    </interactant>
    <organismsDiffer>false</organismsDiffer>
    <experiments>2</experiments>
</comment>
<comment type="interaction">
    <interactant intactId="EBI-1808560">
        <id>Q54N00</id>
    </interactant>
    <interactant intactId="EBI-1808546">
        <id>Q5TJ65</id>
        <label>vasp</label>
    </interactant>
    <organismsDiffer>false</organismsDiffer>
    <experiments>2</experiments>
</comment>
<comment type="subcellular location">
    <subcellularLocation>
        <location evidence="7">Cytoplasm</location>
        <location evidence="7">Cell cortex</location>
    </subcellularLocation>
    <subcellularLocation>
        <location evidence="7">Cytoplasm</location>
        <location evidence="7">Cytoskeleton</location>
    </subcellularLocation>
    <text>Enriched at the tips of filopodia. The N-terminus of the protein targets the protein to the cell cortex and the FH1/FH2 region refines the localization specifically to filopodial tips.</text>
</comment>
<comment type="developmental stage">
    <text evidence="6">Expression is kept at constant levels after the onset of development. During sexual development, displays a significant increase in fusion competent cells.</text>
</comment>
<comment type="domain">
    <text evidence="1">The DAD domain regulates activation via by an autoinhibitory interaction with the GBD/FH3 domain. This autoinhibition is released upon competitive binding of an activated GTPase. The release of DAD allows the FH2 domain to then nucleate and elongate nonbranched actin filaments (By similarity).</text>
</comment>
<comment type="similarity">
    <text evidence="10">Belongs to the formin homology family. Diaphanous subfamily.</text>
</comment>
<name>FORH_DICDI</name>
<accession>Q54N00</accession>
<accession>Q5TJB8</accession>
<feature type="chain" id="PRO_0000327695" description="Formin-H">
    <location>
        <begin position="1"/>
        <end position="1087"/>
    </location>
</feature>
<feature type="domain" description="GBD/FH3" evidence="3">
    <location>
        <begin position="34"/>
        <end position="394"/>
    </location>
</feature>
<feature type="domain" description="FH1">
    <location>
        <begin position="589"/>
        <end position="615"/>
    </location>
</feature>
<feature type="domain" description="FH2" evidence="4">
    <location>
        <begin position="623"/>
        <end position="1016"/>
    </location>
</feature>
<feature type="domain" description="DAD">
    <location>
        <begin position="1013"/>
        <end position="1051"/>
    </location>
</feature>
<feature type="region of interest" description="Disordered" evidence="5">
    <location>
        <begin position="1"/>
        <end position="25"/>
    </location>
</feature>
<feature type="region of interest" description="Disordered" evidence="5">
    <location>
        <begin position="416"/>
        <end position="445"/>
    </location>
</feature>
<feature type="region of interest" description="Disordered" evidence="5">
    <location>
        <begin position="549"/>
        <end position="625"/>
    </location>
</feature>
<feature type="region of interest" description="Disordered" evidence="5">
    <location>
        <begin position="1048"/>
        <end position="1087"/>
    </location>
</feature>
<feature type="coiled-coil region" evidence="2">
    <location>
        <begin position="433"/>
        <end position="461"/>
    </location>
</feature>
<feature type="compositionally biased region" description="Polar residues" evidence="5">
    <location>
        <begin position="1"/>
        <end position="23"/>
    </location>
</feature>
<feature type="compositionally biased region" description="Low complexity" evidence="5">
    <location>
        <begin position="416"/>
        <end position="436"/>
    </location>
</feature>
<feature type="compositionally biased region" description="Low complexity" evidence="5">
    <location>
        <begin position="549"/>
        <end position="558"/>
    </location>
</feature>
<feature type="compositionally biased region" description="Polar residues" evidence="5">
    <location>
        <begin position="569"/>
        <end position="588"/>
    </location>
</feature>
<feature type="compositionally biased region" description="Pro residues" evidence="5">
    <location>
        <begin position="592"/>
        <end position="616"/>
    </location>
</feature>
<feature type="sequence conflict" description="In Ref. 1; CAG38079." evidence="10" ref="1">
    <original>G</original>
    <variation>R</variation>
    <location>
        <position position="497"/>
    </location>
</feature>
<organism>
    <name type="scientific">Dictyostelium discoideum</name>
    <name type="common">Social amoeba</name>
    <dbReference type="NCBI Taxonomy" id="44689"/>
    <lineage>
        <taxon>Eukaryota</taxon>
        <taxon>Amoebozoa</taxon>
        <taxon>Evosea</taxon>
        <taxon>Eumycetozoa</taxon>
        <taxon>Dictyostelia</taxon>
        <taxon>Dictyosteliales</taxon>
        <taxon>Dictyosteliaceae</taxon>
        <taxon>Dictyostelium</taxon>
    </lineage>
</organism>
<evidence type="ECO:0000250" key="1"/>
<evidence type="ECO:0000255" key="2"/>
<evidence type="ECO:0000255" key="3">
    <source>
        <dbReference type="PROSITE-ProRule" id="PRU00579"/>
    </source>
</evidence>
<evidence type="ECO:0000255" key="4">
    <source>
        <dbReference type="PROSITE-ProRule" id="PRU00774"/>
    </source>
</evidence>
<evidence type="ECO:0000256" key="5">
    <source>
        <dbReference type="SAM" id="MobiDB-lite"/>
    </source>
</evidence>
<evidence type="ECO:0000269" key="6">
    <source>
    </source>
</evidence>
<evidence type="ECO:0000269" key="7">
    <source>
    </source>
</evidence>
<evidence type="ECO:0000269" key="8">
    <source>
    </source>
</evidence>
<evidence type="ECO:0000269" key="9">
    <source>
    </source>
</evidence>
<evidence type="ECO:0000305" key="10"/>
<gene>
    <name type="primary">forH</name>
    <name type="synonym">dia2</name>
    <name type="synonym">drf2</name>
    <name type="ORF">DDB_G0285589</name>
</gene>